<evidence type="ECO:0000255" key="1">
    <source>
        <dbReference type="HAMAP-Rule" id="MF_00539"/>
    </source>
</evidence>
<evidence type="ECO:0000305" key="2"/>
<accession>Q8PBH1</accession>
<feature type="chain" id="PRO_0000181209" description="Large ribosomal subunit protein bL27">
    <location>
        <begin position="1"/>
        <end position="86"/>
    </location>
</feature>
<protein>
    <recommendedName>
        <fullName evidence="1">Large ribosomal subunit protein bL27</fullName>
    </recommendedName>
    <alternativeName>
        <fullName evidence="2">50S ribosomal protein L27</fullName>
    </alternativeName>
</protein>
<sequence length="86" mass="9114">MAHKKGVGSSRNGRDSNPKYLGVKIFGGQAIDAGNIIVRQRGTQFHPGAGVGLGRDHTLFALVNGKVEFTTKGPKKRRTVSVVAEA</sequence>
<keyword id="KW-1185">Reference proteome</keyword>
<keyword id="KW-0687">Ribonucleoprotein</keyword>
<keyword id="KW-0689">Ribosomal protein</keyword>
<reference key="1">
    <citation type="journal article" date="2002" name="Nature">
        <title>Comparison of the genomes of two Xanthomonas pathogens with differing host specificities.</title>
        <authorList>
            <person name="da Silva A.C.R."/>
            <person name="Ferro J.A."/>
            <person name="Reinach F.C."/>
            <person name="Farah C.S."/>
            <person name="Furlan L.R."/>
            <person name="Quaggio R.B."/>
            <person name="Monteiro-Vitorello C.B."/>
            <person name="Van Sluys M.A."/>
            <person name="Almeida N.F. Jr."/>
            <person name="Alves L.M.C."/>
            <person name="do Amaral A.M."/>
            <person name="Bertolini M.C."/>
            <person name="Camargo L.E.A."/>
            <person name="Camarotte G."/>
            <person name="Cannavan F."/>
            <person name="Cardozo J."/>
            <person name="Chambergo F."/>
            <person name="Ciapina L.P."/>
            <person name="Cicarelli R.M.B."/>
            <person name="Coutinho L.L."/>
            <person name="Cursino-Santos J.R."/>
            <person name="El-Dorry H."/>
            <person name="Faria J.B."/>
            <person name="Ferreira A.J.S."/>
            <person name="Ferreira R.C.C."/>
            <person name="Ferro M.I.T."/>
            <person name="Formighieri E.F."/>
            <person name="Franco M.C."/>
            <person name="Greggio C.C."/>
            <person name="Gruber A."/>
            <person name="Katsuyama A.M."/>
            <person name="Kishi L.T."/>
            <person name="Leite R.P."/>
            <person name="Lemos E.G.M."/>
            <person name="Lemos M.V.F."/>
            <person name="Locali E.C."/>
            <person name="Machado M.A."/>
            <person name="Madeira A.M.B.N."/>
            <person name="Martinez-Rossi N.M."/>
            <person name="Martins E.C."/>
            <person name="Meidanis J."/>
            <person name="Menck C.F.M."/>
            <person name="Miyaki C.Y."/>
            <person name="Moon D.H."/>
            <person name="Moreira L.M."/>
            <person name="Novo M.T.M."/>
            <person name="Okura V.K."/>
            <person name="Oliveira M.C."/>
            <person name="Oliveira V.R."/>
            <person name="Pereira H.A."/>
            <person name="Rossi A."/>
            <person name="Sena J.A.D."/>
            <person name="Silva C."/>
            <person name="de Souza R.F."/>
            <person name="Spinola L.A.F."/>
            <person name="Takita M.A."/>
            <person name="Tamura R.E."/>
            <person name="Teixeira E.C."/>
            <person name="Tezza R.I.D."/>
            <person name="Trindade dos Santos M."/>
            <person name="Truffi D."/>
            <person name="Tsai S.M."/>
            <person name="White F.F."/>
            <person name="Setubal J.C."/>
            <person name="Kitajima J.P."/>
        </authorList>
    </citation>
    <scope>NUCLEOTIDE SEQUENCE [LARGE SCALE GENOMIC DNA]</scope>
    <source>
        <strain>ATCC 33913 / DSM 3586 / NCPPB 528 / LMG 568 / P 25</strain>
    </source>
</reference>
<name>RL27_XANCP</name>
<gene>
    <name evidence="1" type="primary">rpmA</name>
    <name type="ordered locus">XCC1150</name>
</gene>
<proteinExistence type="inferred from homology"/>
<comment type="similarity">
    <text evidence="1">Belongs to the bacterial ribosomal protein bL27 family.</text>
</comment>
<organism>
    <name type="scientific">Xanthomonas campestris pv. campestris (strain ATCC 33913 / DSM 3586 / NCPPB 528 / LMG 568 / P 25)</name>
    <dbReference type="NCBI Taxonomy" id="190485"/>
    <lineage>
        <taxon>Bacteria</taxon>
        <taxon>Pseudomonadati</taxon>
        <taxon>Pseudomonadota</taxon>
        <taxon>Gammaproteobacteria</taxon>
        <taxon>Lysobacterales</taxon>
        <taxon>Lysobacteraceae</taxon>
        <taxon>Xanthomonas</taxon>
    </lineage>
</organism>
<dbReference type="EMBL" id="AE008922">
    <property type="protein sequence ID" value="AAM40449.1"/>
    <property type="molecule type" value="Genomic_DNA"/>
</dbReference>
<dbReference type="RefSeq" id="NP_636525.1">
    <property type="nucleotide sequence ID" value="NC_003902.1"/>
</dbReference>
<dbReference type="RefSeq" id="WP_011036349.1">
    <property type="nucleotide sequence ID" value="NC_003902.1"/>
</dbReference>
<dbReference type="SMR" id="Q8PBH1"/>
<dbReference type="STRING" id="190485.XCC1150"/>
<dbReference type="EnsemblBacteria" id="AAM40449">
    <property type="protein sequence ID" value="AAM40449"/>
    <property type="gene ID" value="XCC1150"/>
</dbReference>
<dbReference type="GeneID" id="58014265"/>
<dbReference type="KEGG" id="xcc:XCC1150"/>
<dbReference type="PATRIC" id="fig|190485.4.peg.1230"/>
<dbReference type="eggNOG" id="COG0211">
    <property type="taxonomic scope" value="Bacteria"/>
</dbReference>
<dbReference type="HOGENOM" id="CLU_095424_4_0_6"/>
<dbReference type="OrthoDB" id="9803474at2"/>
<dbReference type="Proteomes" id="UP000001010">
    <property type="component" value="Chromosome"/>
</dbReference>
<dbReference type="GO" id="GO:0022625">
    <property type="term" value="C:cytosolic large ribosomal subunit"/>
    <property type="evidence" value="ECO:0000318"/>
    <property type="project" value="GO_Central"/>
</dbReference>
<dbReference type="GO" id="GO:0003735">
    <property type="term" value="F:structural constituent of ribosome"/>
    <property type="evidence" value="ECO:0000318"/>
    <property type="project" value="GO_Central"/>
</dbReference>
<dbReference type="GO" id="GO:0006412">
    <property type="term" value="P:translation"/>
    <property type="evidence" value="ECO:0007669"/>
    <property type="project" value="UniProtKB-UniRule"/>
</dbReference>
<dbReference type="FunFam" id="2.40.50.100:FF:000001">
    <property type="entry name" value="50S ribosomal protein L27"/>
    <property type="match status" value="1"/>
</dbReference>
<dbReference type="Gene3D" id="2.40.50.100">
    <property type="match status" value="1"/>
</dbReference>
<dbReference type="HAMAP" id="MF_00539">
    <property type="entry name" value="Ribosomal_bL27"/>
    <property type="match status" value="1"/>
</dbReference>
<dbReference type="InterPro" id="IPR001684">
    <property type="entry name" value="Ribosomal_bL27"/>
</dbReference>
<dbReference type="InterPro" id="IPR018261">
    <property type="entry name" value="Ribosomal_bL27_CS"/>
</dbReference>
<dbReference type="NCBIfam" id="TIGR00062">
    <property type="entry name" value="L27"/>
    <property type="match status" value="1"/>
</dbReference>
<dbReference type="PANTHER" id="PTHR15893:SF0">
    <property type="entry name" value="LARGE RIBOSOMAL SUBUNIT PROTEIN BL27M"/>
    <property type="match status" value="1"/>
</dbReference>
<dbReference type="PANTHER" id="PTHR15893">
    <property type="entry name" value="RIBOSOMAL PROTEIN L27"/>
    <property type="match status" value="1"/>
</dbReference>
<dbReference type="Pfam" id="PF01016">
    <property type="entry name" value="Ribosomal_L27"/>
    <property type="match status" value="1"/>
</dbReference>
<dbReference type="PRINTS" id="PR00063">
    <property type="entry name" value="RIBOSOMALL27"/>
</dbReference>
<dbReference type="SUPFAM" id="SSF110324">
    <property type="entry name" value="Ribosomal L27 protein-like"/>
    <property type="match status" value="1"/>
</dbReference>
<dbReference type="PROSITE" id="PS00831">
    <property type="entry name" value="RIBOSOMAL_L27"/>
    <property type="match status" value="1"/>
</dbReference>